<sequence length="445" mass="48866">MKHFEANFDGLVGPTHNYAGLSFGNVASLNNAAATSNPRAAAKQGLKKAKALADMGMVQGMLAPQERPDLHTLRRIGFSGTDAEILNKAAKEAPALLRACCSASSMWTANAATVSPSADTHDGKLHFTPANLVDKLHRSIEPETTGNILAATFNNSRHFAHHQHLPEHSSFGDEGAANHTRLCKDYGNAGVELFVYGQEATNPAAPKPSKFPARQTLEASQAIARLHQLDDENTVFISQNPDVIDQGVFHNDVIAVGNQNVLFYHEQAFLDTKRKLDEIKRKFGDSELHFIEVPTSRVAIQDAVKSYLFNTQIITLPSGEMAIIAPTNCQENEAVHAYLNEVVTLGSPIKQVNYFDVKQSMQNGGGPACLRLRVAMNDMELAAVNQHTLMNDALFTRLNAWVDKHYRDRLSVDDLADPQVLIESRTALDELTQIMKLGSVYQFQK</sequence>
<evidence type="ECO:0000255" key="1">
    <source>
        <dbReference type="HAMAP-Rule" id="MF_01172"/>
    </source>
</evidence>
<keyword id="KW-0056">Arginine metabolism</keyword>
<keyword id="KW-0378">Hydrolase</keyword>
<keyword id="KW-1185">Reference proteome</keyword>
<comment type="function">
    <text evidence="1">Catalyzes the hydrolysis of N(2)-succinylarginine into N(2)-succinylornithine, ammonia and CO(2).</text>
</comment>
<comment type="catalytic activity">
    <reaction evidence="1">
        <text>N(2)-succinyl-L-arginine + 2 H2O + 2 H(+) = N(2)-succinyl-L-ornithine + 2 NH4(+) + CO2</text>
        <dbReference type="Rhea" id="RHEA:19533"/>
        <dbReference type="ChEBI" id="CHEBI:15377"/>
        <dbReference type="ChEBI" id="CHEBI:15378"/>
        <dbReference type="ChEBI" id="CHEBI:16526"/>
        <dbReference type="ChEBI" id="CHEBI:28938"/>
        <dbReference type="ChEBI" id="CHEBI:58241"/>
        <dbReference type="ChEBI" id="CHEBI:58514"/>
        <dbReference type="EC" id="3.5.3.23"/>
    </reaction>
</comment>
<comment type="pathway">
    <text evidence="1">Amino-acid degradation; L-arginine degradation via AST pathway; L-glutamate and succinate from L-arginine: step 2/5.</text>
</comment>
<comment type="subunit">
    <text evidence="1">Homodimer.</text>
</comment>
<comment type="similarity">
    <text evidence="1">Belongs to the succinylarginine dihydrolase family.</text>
</comment>
<feature type="chain" id="PRO_1000085400" description="N-succinylarginine dihydrolase">
    <location>
        <begin position="1"/>
        <end position="445"/>
    </location>
</feature>
<feature type="active site" evidence="1">
    <location>
        <position position="174"/>
    </location>
</feature>
<feature type="active site" evidence="1">
    <location>
        <position position="250"/>
    </location>
</feature>
<feature type="active site" description="Nucleophile" evidence="1">
    <location>
        <position position="369"/>
    </location>
</feature>
<feature type="binding site" evidence="1">
    <location>
        <begin position="19"/>
        <end position="28"/>
    </location>
    <ligand>
        <name>substrate</name>
    </ligand>
</feature>
<feature type="binding site" evidence="1">
    <location>
        <position position="110"/>
    </location>
    <ligand>
        <name>substrate</name>
    </ligand>
</feature>
<feature type="binding site" evidence="1">
    <location>
        <begin position="137"/>
        <end position="138"/>
    </location>
    <ligand>
        <name>substrate</name>
    </ligand>
</feature>
<feature type="binding site" evidence="1">
    <location>
        <position position="214"/>
    </location>
    <ligand>
        <name>substrate</name>
    </ligand>
</feature>
<feature type="binding site" evidence="1">
    <location>
        <position position="252"/>
    </location>
    <ligand>
        <name>substrate</name>
    </ligand>
</feature>
<feature type="binding site" evidence="1">
    <location>
        <position position="363"/>
    </location>
    <ligand>
        <name>substrate</name>
    </ligand>
</feature>
<proteinExistence type="inferred from homology"/>
<organism>
    <name type="scientific">Shewanella sediminis (strain HAW-EB3)</name>
    <dbReference type="NCBI Taxonomy" id="425104"/>
    <lineage>
        <taxon>Bacteria</taxon>
        <taxon>Pseudomonadati</taxon>
        <taxon>Pseudomonadota</taxon>
        <taxon>Gammaproteobacteria</taxon>
        <taxon>Alteromonadales</taxon>
        <taxon>Shewanellaceae</taxon>
        <taxon>Shewanella</taxon>
    </lineage>
</organism>
<gene>
    <name evidence="1" type="primary">astB</name>
    <name type="ordered locus">Ssed_2842</name>
</gene>
<reference key="1">
    <citation type="submission" date="2007-08" db="EMBL/GenBank/DDBJ databases">
        <title>Complete sequence of Shewanella sediminis HAW-EB3.</title>
        <authorList>
            <consortium name="US DOE Joint Genome Institute"/>
            <person name="Copeland A."/>
            <person name="Lucas S."/>
            <person name="Lapidus A."/>
            <person name="Barry K."/>
            <person name="Glavina del Rio T."/>
            <person name="Dalin E."/>
            <person name="Tice H."/>
            <person name="Pitluck S."/>
            <person name="Chertkov O."/>
            <person name="Brettin T."/>
            <person name="Bruce D."/>
            <person name="Detter J.C."/>
            <person name="Han C."/>
            <person name="Schmutz J."/>
            <person name="Larimer F."/>
            <person name="Land M."/>
            <person name="Hauser L."/>
            <person name="Kyrpides N."/>
            <person name="Kim E."/>
            <person name="Zhao J.-S."/>
            <person name="Richardson P."/>
        </authorList>
    </citation>
    <scope>NUCLEOTIDE SEQUENCE [LARGE SCALE GENOMIC DNA]</scope>
    <source>
        <strain>HAW-EB3</strain>
    </source>
</reference>
<accession>A8FX76</accession>
<dbReference type="EC" id="3.5.3.23" evidence="1"/>
<dbReference type="EMBL" id="CP000821">
    <property type="protein sequence ID" value="ABV37449.1"/>
    <property type="molecule type" value="Genomic_DNA"/>
</dbReference>
<dbReference type="RefSeq" id="WP_012143179.1">
    <property type="nucleotide sequence ID" value="NC_009831.1"/>
</dbReference>
<dbReference type="SMR" id="A8FX76"/>
<dbReference type="STRING" id="425104.Ssed_2842"/>
<dbReference type="KEGG" id="sse:Ssed_2842"/>
<dbReference type="eggNOG" id="COG3724">
    <property type="taxonomic scope" value="Bacteria"/>
</dbReference>
<dbReference type="HOGENOM" id="CLU_053835_0_0_6"/>
<dbReference type="OrthoDB" id="248552at2"/>
<dbReference type="UniPathway" id="UPA00185">
    <property type="reaction ID" value="UER00280"/>
</dbReference>
<dbReference type="Proteomes" id="UP000002015">
    <property type="component" value="Chromosome"/>
</dbReference>
<dbReference type="GO" id="GO:0009015">
    <property type="term" value="F:N-succinylarginine dihydrolase activity"/>
    <property type="evidence" value="ECO:0007669"/>
    <property type="project" value="UniProtKB-UniRule"/>
</dbReference>
<dbReference type="GO" id="GO:0019544">
    <property type="term" value="P:arginine catabolic process to glutamate"/>
    <property type="evidence" value="ECO:0007669"/>
    <property type="project" value="UniProtKB-UniRule"/>
</dbReference>
<dbReference type="GO" id="GO:0019545">
    <property type="term" value="P:arginine catabolic process to succinate"/>
    <property type="evidence" value="ECO:0007669"/>
    <property type="project" value="UniProtKB-UniRule"/>
</dbReference>
<dbReference type="Gene3D" id="3.75.10.20">
    <property type="entry name" value="Succinylarginine dihydrolase"/>
    <property type="match status" value="1"/>
</dbReference>
<dbReference type="HAMAP" id="MF_01172">
    <property type="entry name" value="AstB"/>
    <property type="match status" value="1"/>
</dbReference>
<dbReference type="InterPro" id="IPR037031">
    <property type="entry name" value="AstB_sf"/>
</dbReference>
<dbReference type="InterPro" id="IPR007079">
    <property type="entry name" value="SuccinylArg_d-Hdrlase_AstB"/>
</dbReference>
<dbReference type="NCBIfam" id="TIGR03241">
    <property type="entry name" value="arg_catab_astB"/>
    <property type="match status" value="1"/>
</dbReference>
<dbReference type="NCBIfam" id="NF009789">
    <property type="entry name" value="PRK13281.1"/>
    <property type="match status" value="1"/>
</dbReference>
<dbReference type="PANTHER" id="PTHR30420">
    <property type="entry name" value="N-SUCCINYLARGININE DIHYDROLASE"/>
    <property type="match status" value="1"/>
</dbReference>
<dbReference type="PANTHER" id="PTHR30420:SF2">
    <property type="entry name" value="N-SUCCINYLARGININE DIHYDROLASE"/>
    <property type="match status" value="1"/>
</dbReference>
<dbReference type="Pfam" id="PF04996">
    <property type="entry name" value="AstB"/>
    <property type="match status" value="1"/>
</dbReference>
<dbReference type="SUPFAM" id="SSF55909">
    <property type="entry name" value="Pentein"/>
    <property type="match status" value="1"/>
</dbReference>
<name>ASTB_SHESH</name>
<protein>
    <recommendedName>
        <fullName evidence="1">N-succinylarginine dihydrolase</fullName>
        <ecNumber evidence="1">3.5.3.23</ecNumber>
    </recommendedName>
</protein>